<organism>
    <name type="scientific">Thermotoga petrophila (strain ATCC BAA-488 / DSM 13995 / JCM 10881 / RKU-1)</name>
    <dbReference type="NCBI Taxonomy" id="390874"/>
    <lineage>
        <taxon>Bacteria</taxon>
        <taxon>Thermotogati</taxon>
        <taxon>Thermotogota</taxon>
        <taxon>Thermotogae</taxon>
        <taxon>Thermotogales</taxon>
        <taxon>Thermotogaceae</taxon>
        <taxon>Thermotoga</taxon>
    </lineage>
</organism>
<sequence length="270" mass="29742">MLELKPPLVLLSGPAGFGEYLKLMDHRYVGGVLLKTVTLHPKEGNPTPRMADSDFYVINRIGLENPGIHAFVENIPELPVPMIASLGGDSFEEYLEVARVFKKVADRFYAVEFNFSCPNVKEGGLSIVKNAEEWKKLLNTLRKELPDSFLIAKVGVEGIFVEDAAEFVMKTGWDGITLVNTVRGLHFEKDTMILGGLSGPVLKPIALRAVYEVKKRFPELFVIASGGVYSVKDAEEFLKVGADVIGVGSALFKDPGVVEEIGKYLLEVKR</sequence>
<comment type="function">
    <text evidence="1">Catalyzes the conversion of dihydroorotate to orotate with NAD(+) as electron acceptor.</text>
</comment>
<comment type="catalytic activity">
    <reaction>
        <text>(S)-dihydroorotate + NAD(+) = orotate + NADH + H(+)</text>
        <dbReference type="Rhea" id="RHEA:13513"/>
        <dbReference type="ChEBI" id="CHEBI:15378"/>
        <dbReference type="ChEBI" id="CHEBI:30839"/>
        <dbReference type="ChEBI" id="CHEBI:30864"/>
        <dbReference type="ChEBI" id="CHEBI:57540"/>
        <dbReference type="ChEBI" id="CHEBI:57945"/>
        <dbReference type="EC" id="1.3.1.14"/>
    </reaction>
</comment>
<comment type="cofactor">
    <cofactor evidence="1">
        <name>FMN</name>
        <dbReference type="ChEBI" id="CHEBI:58210"/>
    </cofactor>
    <text evidence="1">Binds 1 FMN per subunit.</text>
</comment>
<comment type="pathway">
    <text>Pyrimidine metabolism; UMP biosynthesis via de novo pathway; orotate from (S)-dihydroorotate (NAD(+) route): step 1/1.</text>
</comment>
<comment type="subunit">
    <text evidence="1">Heterotetramer of 2 PyrK and 2 PyrD type B subunits.</text>
</comment>
<comment type="subcellular location">
    <subcellularLocation>
        <location evidence="1">Cytoplasm</location>
    </subcellularLocation>
</comment>
<comment type="similarity">
    <text evidence="2">Belongs to the dihydroorotate dehydrogenase family. Type 1 subfamily.</text>
</comment>
<feature type="chain" id="PRO_1000024143" description="Dihydroorotate dehydrogenase B (NAD(+)), catalytic subunit">
    <location>
        <begin position="1"/>
        <end position="270"/>
    </location>
</feature>
<feature type="active site" description="Nucleophile">
    <location>
        <position position="117"/>
    </location>
</feature>
<feature type="binding site" evidence="1">
    <location>
        <position position="12"/>
    </location>
    <ligand>
        <name>FMN</name>
        <dbReference type="ChEBI" id="CHEBI:58210"/>
    </ligand>
</feature>
<feature type="binding site" evidence="1">
    <location>
        <begin position="35"/>
        <end position="36"/>
    </location>
    <ligand>
        <name>FMN</name>
        <dbReference type="ChEBI" id="CHEBI:58210"/>
    </ligand>
</feature>
<feature type="binding site" evidence="1">
    <location>
        <position position="35"/>
    </location>
    <ligand>
        <name>substrate</name>
    </ligand>
</feature>
<feature type="binding site" evidence="1">
    <location>
        <begin position="59"/>
        <end position="63"/>
    </location>
    <ligand>
        <name>substrate</name>
    </ligand>
</feature>
<feature type="binding site" evidence="1">
    <location>
        <position position="114"/>
    </location>
    <ligand>
        <name>FMN</name>
        <dbReference type="ChEBI" id="CHEBI:58210"/>
    </ligand>
</feature>
<feature type="binding site" evidence="1">
    <location>
        <position position="114"/>
    </location>
    <ligand>
        <name>substrate</name>
    </ligand>
</feature>
<feature type="binding site" evidence="1">
    <location>
        <position position="153"/>
    </location>
    <ligand>
        <name>FMN</name>
        <dbReference type="ChEBI" id="CHEBI:58210"/>
    </ligand>
</feature>
<feature type="binding site" evidence="1">
    <location>
        <position position="179"/>
    </location>
    <ligand>
        <name>FMN</name>
        <dbReference type="ChEBI" id="CHEBI:58210"/>
    </ligand>
</feature>
<feature type="binding site" evidence="1">
    <location>
        <begin position="180"/>
        <end position="181"/>
    </location>
    <ligand>
        <name>substrate</name>
    </ligand>
</feature>
<feature type="binding site" evidence="1">
    <location>
        <position position="199"/>
    </location>
    <ligand>
        <name>FMN</name>
        <dbReference type="ChEBI" id="CHEBI:58210"/>
    </ligand>
</feature>
<feature type="binding site" evidence="1">
    <location>
        <begin position="226"/>
        <end position="227"/>
    </location>
    <ligand>
        <name>FMN</name>
        <dbReference type="ChEBI" id="CHEBI:58210"/>
    </ligand>
</feature>
<feature type="binding site" evidence="1">
    <location>
        <begin position="248"/>
        <end position="249"/>
    </location>
    <ligand>
        <name>FMN</name>
        <dbReference type="ChEBI" id="CHEBI:58210"/>
    </ligand>
</feature>
<dbReference type="EC" id="1.3.1.14"/>
<dbReference type="EMBL" id="CP000702">
    <property type="protein sequence ID" value="ABQ46607.1"/>
    <property type="molecule type" value="Genomic_DNA"/>
</dbReference>
<dbReference type="RefSeq" id="WP_004083101.1">
    <property type="nucleotide sequence ID" value="NC_009486.1"/>
</dbReference>
<dbReference type="SMR" id="A5IK84"/>
<dbReference type="STRING" id="390874.Tpet_0586"/>
<dbReference type="KEGG" id="tpt:Tpet_0586"/>
<dbReference type="eggNOG" id="COG0167">
    <property type="taxonomic scope" value="Bacteria"/>
</dbReference>
<dbReference type="HOGENOM" id="CLU_042042_0_1_0"/>
<dbReference type="UniPathway" id="UPA00070">
    <property type="reaction ID" value="UER00945"/>
</dbReference>
<dbReference type="Proteomes" id="UP000006558">
    <property type="component" value="Chromosome"/>
</dbReference>
<dbReference type="GO" id="GO:0005737">
    <property type="term" value="C:cytoplasm"/>
    <property type="evidence" value="ECO:0007669"/>
    <property type="project" value="UniProtKB-SubCell"/>
</dbReference>
<dbReference type="GO" id="GO:0004589">
    <property type="term" value="F:dihydroorotate dehydrogenase (NAD+) activity"/>
    <property type="evidence" value="ECO:0007669"/>
    <property type="project" value="UniProtKB-EC"/>
</dbReference>
<dbReference type="GO" id="GO:0006207">
    <property type="term" value="P:'de novo' pyrimidine nucleobase biosynthetic process"/>
    <property type="evidence" value="ECO:0007669"/>
    <property type="project" value="InterPro"/>
</dbReference>
<dbReference type="GO" id="GO:0044205">
    <property type="term" value="P:'de novo' UMP biosynthetic process"/>
    <property type="evidence" value="ECO:0007669"/>
    <property type="project" value="UniProtKB-UniRule"/>
</dbReference>
<dbReference type="FunFam" id="3.20.20.70:FF:000339">
    <property type="entry name" value="Dihydroorotate dehydrogenase family protein"/>
    <property type="match status" value="1"/>
</dbReference>
<dbReference type="Gene3D" id="3.20.20.70">
    <property type="entry name" value="Aldolase class I"/>
    <property type="match status" value="1"/>
</dbReference>
<dbReference type="HAMAP" id="MF_00224">
    <property type="entry name" value="DHO_dh_type1"/>
    <property type="match status" value="1"/>
</dbReference>
<dbReference type="InterPro" id="IPR013785">
    <property type="entry name" value="Aldolase_TIM"/>
</dbReference>
<dbReference type="InterPro" id="IPR050074">
    <property type="entry name" value="DHO_dehydrogenase"/>
</dbReference>
<dbReference type="InterPro" id="IPR024920">
    <property type="entry name" value="Dihydroorotate_DH_1"/>
</dbReference>
<dbReference type="InterPro" id="IPR012135">
    <property type="entry name" value="Dihydroorotate_DH_1_2"/>
</dbReference>
<dbReference type="InterPro" id="IPR005720">
    <property type="entry name" value="Dihydroorotate_DH_cat"/>
</dbReference>
<dbReference type="InterPro" id="IPR001295">
    <property type="entry name" value="Dihydroorotate_DH_CS"/>
</dbReference>
<dbReference type="PANTHER" id="PTHR48109:SF1">
    <property type="entry name" value="DIHYDROOROTATE DEHYDROGENASE (FUMARATE)"/>
    <property type="match status" value="1"/>
</dbReference>
<dbReference type="PANTHER" id="PTHR48109">
    <property type="entry name" value="DIHYDROOROTATE DEHYDROGENASE (QUINONE), MITOCHONDRIAL-RELATED"/>
    <property type="match status" value="1"/>
</dbReference>
<dbReference type="Pfam" id="PF01180">
    <property type="entry name" value="DHO_dh"/>
    <property type="match status" value="1"/>
</dbReference>
<dbReference type="PIRSF" id="PIRSF000164">
    <property type="entry name" value="DHO_oxidase"/>
    <property type="match status" value="1"/>
</dbReference>
<dbReference type="SUPFAM" id="SSF51395">
    <property type="entry name" value="FMN-linked oxidoreductases"/>
    <property type="match status" value="1"/>
</dbReference>
<dbReference type="PROSITE" id="PS00911">
    <property type="entry name" value="DHODEHASE_1"/>
    <property type="match status" value="1"/>
</dbReference>
<dbReference type="PROSITE" id="PS00912">
    <property type="entry name" value="DHODEHASE_2"/>
    <property type="match status" value="1"/>
</dbReference>
<name>PYRDB_THEP1</name>
<gene>
    <name type="primary">pyrD</name>
    <name type="ordered locus">Tpet_0586</name>
</gene>
<keyword id="KW-0963">Cytoplasm</keyword>
<keyword id="KW-0285">Flavoprotein</keyword>
<keyword id="KW-0288">FMN</keyword>
<keyword id="KW-0520">NAD</keyword>
<keyword id="KW-0560">Oxidoreductase</keyword>
<keyword id="KW-0665">Pyrimidine biosynthesis</keyword>
<protein>
    <recommendedName>
        <fullName>Dihydroorotate dehydrogenase B (NAD(+)), catalytic subunit</fullName>
        <shortName>DHOD B</shortName>
        <shortName>DHODase B</shortName>
        <shortName>DHOdehase B</shortName>
        <ecNumber>1.3.1.14</ecNumber>
    </recommendedName>
    <alternativeName>
        <fullName>Dihydroorotate oxidase B</fullName>
    </alternativeName>
    <alternativeName>
        <fullName>Orotate reductase (NADH)</fullName>
    </alternativeName>
</protein>
<proteinExistence type="inferred from homology"/>
<evidence type="ECO:0000250" key="1"/>
<evidence type="ECO:0000305" key="2"/>
<reference key="1">
    <citation type="submission" date="2007-05" db="EMBL/GenBank/DDBJ databases">
        <title>Complete sequence of Thermotoga petrophila RKU-1.</title>
        <authorList>
            <consortium name="US DOE Joint Genome Institute"/>
            <person name="Copeland A."/>
            <person name="Lucas S."/>
            <person name="Lapidus A."/>
            <person name="Barry K."/>
            <person name="Glavina del Rio T."/>
            <person name="Dalin E."/>
            <person name="Tice H."/>
            <person name="Pitluck S."/>
            <person name="Sims D."/>
            <person name="Brettin T."/>
            <person name="Bruce D."/>
            <person name="Detter J.C."/>
            <person name="Han C."/>
            <person name="Tapia R."/>
            <person name="Schmutz J."/>
            <person name="Larimer F."/>
            <person name="Land M."/>
            <person name="Hauser L."/>
            <person name="Kyrpides N."/>
            <person name="Mikhailova N."/>
            <person name="Nelson K."/>
            <person name="Gogarten J.P."/>
            <person name="Noll K."/>
            <person name="Richardson P."/>
        </authorList>
    </citation>
    <scope>NUCLEOTIDE SEQUENCE [LARGE SCALE GENOMIC DNA]</scope>
    <source>
        <strain>ATCC BAA-488 / DSM 13995 / JCM 10881 / RKU-1</strain>
    </source>
</reference>
<accession>A5IK84</accession>